<feature type="chain" id="PRO_0000292677" description="sn-glycerol-3-phosphate transport system permease protein UgpE">
    <location>
        <begin position="1"/>
        <end position="281"/>
    </location>
</feature>
<feature type="transmembrane region" description="Helical" evidence="3">
    <location>
        <begin position="16"/>
        <end position="36"/>
    </location>
</feature>
<feature type="transmembrane region" description="Helical" evidence="3">
    <location>
        <begin position="85"/>
        <end position="105"/>
    </location>
</feature>
<feature type="transmembrane region" description="Helical" evidence="3">
    <location>
        <begin position="113"/>
        <end position="133"/>
    </location>
</feature>
<feature type="transmembrane region" description="Helical" evidence="3">
    <location>
        <begin position="142"/>
        <end position="162"/>
    </location>
</feature>
<feature type="transmembrane region" description="Helical" evidence="3">
    <location>
        <begin position="202"/>
        <end position="222"/>
    </location>
</feature>
<feature type="transmembrane region" description="Helical" evidence="3">
    <location>
        <begin position="247"/>
        <end position="267"/>
    </location>
</feature>
<feature type="domain" description="ABC transmembrane type-1" evidence="3">
    <location>
        <begin position="77"/>
        <end position="268"/>
    </location>
</feature>
<reference key="1">
    <citation type="journal article" date="2006" name="Mol. Microbiol.">
        <title>Role of pathogenicity island-associated integrases in the genome plasticity of uropathogenic Escherichia coli strain 536.</title>
        <authorList>
            <person name="Hochhut B."/>
            <person name="Wilde C."/>
            <person name="Balling G."/>
            <person name="Middendorf B."/>
            <person name="Dobrindt U."/>
            <person name="Brzuszkiewicz E."/>
            <person name="Gottschalk G."/>
            <person name="Carniel E."/>
            <person name="Hacker J."/>
        </authorList>
    </citation>
    <scope>NUCLEOTIDE SEQUENCE [LARGE SCALE GENOMIC DNA]</scope>
    <source>
        <strain>536 / UPEC</strain>
    </source>
</reference>
<organism>
    <name type="scientific">Escherichia coli O6:K15:H31 (strain 536 / UPEC)</name>
    <dbReference type="NCBI Taxonomy" id="362663"/>
    <lineage>
        <taxon>Bacteria</taxon>
        <taxon>Pseudomonadati</taxon>
        <taxon>Pseudomonadota</taxon>
        <taxon>Gammaproteobacteria</taxon>
        <taxon>Enterobacterales</taxon>
        <taxon>Enterobacteriaceae</taxon>
        <taxon>Escherichia</taxon>
    </lineage>
</organism>
<accession>Q0TC09</accession>
<proteinExistence type="inferred from homology"/>
<gene>
    <name type="primary">ugpE</name>
    <name type="ordered locus">ECP_3544</name>
</gene>
<evidence type="ECO:0000250" key="1">
    <source>
        <dbReference type="UniProtKB" id="P10906"/>
    </source>
</evidence>
<evidence type="ECO:0000255" key="2"/>
<evidence type="ECO:0000255" key="3">
    <source>
        <dbReference type="PROSITE-ProRule" id="PRU00441"/>
    </source>
</evidence>
<evidence type="ECO:0000305" key="4"/>
<sequence length="281" mass="31530">MIENRPWLTIFSHTMLILGIAVILFPLYVAFVAATLDKQEVYAAPMTLIPGTHLLENIHNIWVNGVGTNSAPFWRMLLNSFVMAFSITLGKITVSMLSAFAIVWFRFPLRNLFFWMIFITLMLPVEVRIFPTVEVIANLKMLDSYAGLTLPLMASATATFLFRQFFMTLPDELVEAARIDGASPMRFFCDIVFPLSKTNLAALFVITFIYGWNQYLWPLLIITDVDLGTTVAGIKGMIATGEGTTEWNSVMAAMLLTLIPPVVIVLVMQRAFVRGLVDSEK</sequence>
<comment type="function">
    <text evidence="1">Part of the ABC transporter complex UgpBAEC involved in sn-glycerol-3-phosphate (G3P) import. Probably responsible for the translocation of the substrate across the membrane.</text>
</comment>
<comment type="subunit">
    <text evidence="1">The complex is composed of two ATP-binding proteins (UgpC), two transmembrane proteins (UgpA and UgpE) and a solute-binding protein (UgpB).</text>
</comment>
<comment type="subcellular location">
    <subcellularLocation>
        <location evidence="1">Cell inner membrane</location>
        <topology evidence="2">Multi-pass membrane protein</topology>
    </subcellularLocation>
</comment>
<comment type="similarity">
    <text evidence="4">Belongs to the binding-protein-dependent transport system permease family. UgpAE subfamily.</text>
</comment>
<dbReference type="EMBL" id="CP000247">
    <property type="protein sequence ID" value="ABG71520.1"/>
    <property type="molecule type" value="Genomic_DNA"/>
</dbReference>
<dbReference type="RefSeq" id="WP_000572183.1">
    <property type="nucleotide sequence ID" value="NC_008253.1"/>
</dbReference>
<dbReference type="SMR" id="Q0TC09"/>
<dbReference type="GeneID" id="89518281"/>
<dbReference type="KEGG" id="ecp:ECP_3544"/>
<dbReference type="HOGENOM" id="CLU_016047_1_1_6"/>
<dbReference type="Proteomes" id="UP000009182">
    <property type="component" value="Chromosome"/>
</dbReference>
<dbReference type="GO" id="GO:0005886">
    <property type="term" value="C:plasma membrane"/>
    <property type="evidence" value="ECO:0007669"/>
    <property type="project" value="UniProtKB-SubCell"/>
</dbReference>
<dbReference type="GO" id="GO:0055085">
    <property type="term" value="P:transmembrane transport"/>
    <property type="evidence" value="ECO:0007669"/>
    <property type="project" value="InterPro"/>
</dbReference>
<dbReference type="CDD" id="cd06261">
    <property type="entry name" value="TM_PBP2"/>
    <property type="match status" value="1"/>
</dbReference>
<dbReference type="FunFam" id="1.10.3720.10:FF:000042">
    <property type="entry name" value="sn-glycerol-3-phosphate transport system permease protein UgpE"/>
    <property type="match status" value="1"/>
</dbReference>
<dbReference type="Gene3D" id="1.10.3720.10">
    <property type="entry name" value="MetI-like"/>
    <property type="match status" value="1"/>
</dbReference>
<dbReference type="InterPro" id="IPR000515">
    <property type="entry name" value="MetI-like"/>
</dbReference>
<dbReference type="InterPro" id="IPR035906">
    <property type="entry name" value="MetI-like_sf"/>
</dbReference>
<dbReference type="NCBIfam" id="NF008210">
    <property type="entry name" value="PRK10973.1"/>
    <property type="match status" value="1"/>
</dbReference>
<dbReference type="PANTHER" id="PTHR43744">
    <property type="entry name" value="ABC TRANSPORTER PERMEASE PROTEIN MG189-RELATED-RELATED"/>
    <property type="match status" value="1"/>
</dbReference>
<dbReference type="PANTHER" id="PTHR43744:SF8">
    <property type="entry name" value="SN-GLYCEROL-3-PHOSPHATE TRANSPORT SYSTEM PERMEASE PROTEIN UGPE"/>
    <property type="match status" value="1"/>
</dbReference>
<dbReference type="Pfam" id="PF00528">
    <property type="entry name" value="BPD_transp_1"/>
    <property type="match status" value="1"/>
</dbReference>
<dbReference type="SUPFAM" id="SSF161098">
    <property type="entry name" value="MetI-like"/>
    <property type="match status" value="1"/>
</dbReference>
<dbReference type="PROSITE" id="PS50928">
    <property type="entry name" value="ABC_TM1"/>
    <property type="match status" value="1"/>
</dbReference>
<keyword id="KW-0997">Cell inner membrane</keyword>
<keyword id="KW-1003">Cell membrane</keyword>
<keyword id="KW-0472">Membrane</keyword>
<keyword id="KW-0812">Transmembrane</keyword>
<keyword id="KW-1133">Transmembrane helix</keyword>
<keyword id="KW-0813">Transport</keyword>
<protein>
    <recommendedName>
        <fullName evidence="1">sn-glycerol-3-phosphate transport system permease protein UgpE</fullName>
    </recommendedName>
</protein>
<name>UGPE_ECOL5</name>